<comment type="function">
    <text evidence="1">Catalyzes the dehydration of D-mannonate.</text>
</comment>
<comment type="catalytic activity">
    <reaction evidence="1">
        <text>D-mannonate = 2-dehydro-3-deoxy-D-gluconate + H2O</text>
        <dbReference type="Rhea" id="RHEA:20097"/>
        <dbReference type="ChEBI" id="CHEBI:15377"/>
        <dbReference type="ChEBI" id="CHEBI:17767"/>
        <dbReference type="ChEBI" id="CHEBI:57990"/>
        <dbReference type="EC" id="4.2.1.8"/>
    </reaction>
</comment>
<comment type="cofactor">
    <cofactor evidence="1">
        <name>Fe(2+)</name>
        <dbReference type="ChEBI" id="CHEBI:29033"/>
    </cofactor>
    <cofactor evidence="1">
        <name>Mn(2+)</name>
        <dbReference type="ChEBI" id="CHEBI:29035"/>
    </cofactor>
</comment>
<comment type="pathway">
    <text evidence="1">Carbohydrate metabolism; pentose and glucuronate interconversion.</text>
</comment>
<comment type="similarity">
    <text evidence="1">Belongs to the mannonate dehydratase family.</text>
</comment>
<gene>
    <name evidence="1" type="primary">uxuA</name>
    <name type="ordered locus">VPA1700</name>
</gene>
<sequence length="395" mass="44985">MEQTWRWYGPNDPVSLDDIRQAGATGIVNALHHIPNGEVWSKEEILKRKAIIEEKGLTWSVVESVPVHEEIKTLTGNFQQWIDNYKQTLRNLAECGVDTVCYNFMPVLDWTRTDLEFEMPDGSKALRFDQIAFAAFELHILKRPGAEADYTEAEQAQALEYFNNMTADQIQQLTSNIIAGLPGAEEGYTLEEFQAQLDRYAGISKDKLREHMAYFLSQLMPVCEAHGLKLAVHPDDPPRPILGLPRIVSTIEDIDWLTEKVPSKMNGLTMCTGSYGVRGDNDLVKMIKKHGERIYFTHLRSTKREESNPMTFHEAAHLDGDVDMYNVVMAILDEEQRRAEVGDHRLIPMRPDHGHQMLDDLKKKTNPGYSAIGRLKGLAEVRGLEMALKRAFYTK</sequence>
<proteinExistence type="inferred from homology"/>
<feature type="chain" id="PRO_0000170691" description="Mannonate dehydratase">
    <location>
        <begin position="1"/>
        <end position="395"/>
    </location>
</feature>
<name>UXUA_VIBPA</name>
<accession>Q87FH9</accession>
<protein>
    <recommendedName>
        <fullName evidence="1">Mannonate dehydratase</fullName>
        <ecNumber evidence="1">4.2.1.8</ecNumber>
    </recommendedName>
    <alternativeName>
        <fullName evidence="1">D-mannonate hydro-lyase</fullName>
    </alternativeName>
</protein>
<keyword id="KW-0408">Iron</keyword>
<keyword id="KW-0456">Lyase</keyword>
<keyword id="KW-0464">Manganese</keyword>
<reference key="1">
    <citation type="journal article" date="2003" name="Lancet">
        <title>Genome sequence of Vibrio parahaemolyticus: a pathogenic mechanism distinct from that of V. cholerae.</title>
        <authorList>
            <person name="Makino K."/>
            <person name="Oshima K."/>
            <person name="Kurokawa K."/>
            <person name="Yokoyama K."/>
            <person name="Uda T."/>
            <person name="Tagomori K."/>
            <person name="Iijima Y."/>
            <person name="Najima M."/>
            <person name="Nakano M."/>
            <person name="Yamashita A."/>
            <person name="Kubota Y."/>
            <person name="Kimura S."/>
            <person name="Yasunaga T."/>
            <person name="Honda T."/>
            <person name="Shinagawa H."/>
            <person name="Hattori M."/>
            <person name="Iida T."/>
        </authorList>
    </citation>
    <scope>NUCLEOTIDE SEQUENCE [LARGE SCALE GENOMIC DNA]</scope>
    <source>
        <strain>RIMD 2210633</strain>
    </source>
</reference>
<dbReference type="EC" id="4.2.1.8" evidence="1"/>
<dbReference type="EMBL" id="BA000032">
    <property type="protein sequence ID" value="BAC63043.1"/>
    <property type="molecule type" value="Genomic_DNA"/>
</dbReference>
<dbReference type="RefSeq" id="NP_801210.1">
    <property type="nucleotide sequence ID" value="NC_004605.1"/>
</dbReference>
<dbReference type="RefSeq" id="WP_005477427.1">
    <property type="nucleotide sequence ID" value="NC_004605.1"/>
</dbReference>
<dbReference type="SMR" id="Q87FH9"/>
<dbReference type="GeneID" id="1192396"/>
<dbReference type="KEGG" id="vpa:VPA1700"/>
<dbReference type="PATRIC" id="fig|223926.6.peg.4616"/>
<dbReference type="eggNOG" id="COG1312">
    <property type="taxonomic scope" value="Bacteria"/>
</dbReference>
<dbReference type="HOGENOM" id="CLU_058621_2_0_6"/>
<dbReference type="UniPathway" id="UPA00246"/>
<dbReference type="Proteomes" id="UP000002493">
    <property type="component" value="Chromosome 2"/>
</dbReference>
<dbReference type="GO" id="GO:0008198">
    <property type="term" value="F:ferrous iron binding"/>
    <property type="evidence" value="ECO:0007669"/>
    <property type="project" value="TreeGrafter"/>
</dbReference>
<dbReference type="GO" id="GO:0030145">
    <property type="term" value="F:manganese ion binding"/>
    <property type="evidence" value="ECO:0007669"/>
    <property type="project" value="TreeGrafter"/>
</dbReference>
<dbReference type="GO" id="GO:0008927">
    <property type="term" value="F:mannonate dehydratase activity"/>
    <property type="evidence" value="ECO:0007669"/>
    <property type="project" value="UniProtKB-UniRule"/>
</dbReference>
<dbReference type="GO" id="GO:0042840">
    <property type="term" value="P:D-glucuronate catabolic process"/>
    <property type="evidence" value="ECO:0007669"/>
    <property type="project" value="TreeGrafter"/>
</dbReference>
<dbReference type="FunFam" id="3.20.20.150:FF:000010">
    <property type="entry name" value="Mannonate dehydratase"/>
    <property type="match status" value="1"/>
</dbReference>
<dbReference type="Gene3D" id="3.20.20.150">
    <property type="entry name" value="Divalent-metal-dependent TIM barrel enzymes"/>
    <property type="match status" value="2"/>
</dbReference>
<dbReference type="HAMAP" id="MF_00106">
    <property type="entry name" value="UxuA"/>
    <property type="match status" value="1"/>
</dbReference>
<dbReference type="InterPro" id="IPR004628">
    <property type="entry name" value="Man_deHydtase"/>
</dbReference>
<dbReference type="InterPro" id="IPR036237">
    <property type="entry name" value="Xyl_isomerase-like_sf"/>
</dbReference>
<dbReference type="NCBIfam" id="NF003027">
    <property type="entry name" value="PRK03906.1"/>
    <property type="match status" value="1"/>
</dbReference>
<dbReference type="NCBIfam" id="TIGR00695">
    <property type="entry name" value="uxuA"/>
    <property type="match status" value="1"/>
</dbReference>
<dbReference type="PANTHER" id="PTHR30387">
    <property type="entry name" value="MANNONATE DEHYDRATASE"/>
    <property type="match status" value="1"/>
</dbReference>
<dbReference type="PANTHER" id="PTHR30387:SF2">
    <property type="entry name" value="MANNONATE DEHYDRATASE"/>
    <property type="match status" value="1"/>
</dbReference>
<dbReference type="Pfam" id="PF03786">
    <property type="entry name" value="UxuA"/>
    <property type="match status" value="1"/>
</dbReference>
<dbReference type="PIRSF" id="PIRSF016049">
    <property type="entry name" value="Man_dehyd"/>
    <property type="match status" value="1"/>
</dbReference>
<dbReference type="SUPFAM" id="SSF51658">
    <property type="entry name" value="Xylose isomerase-like"/>
    <property type="match status" value="1"/>
</dbReference>
<evidence type="ECO:0000255" key="1">
    <source>
        <dbReference type="HAMAP-Rule" id="MF_00106"/>
    </source>
</evidence>
<organism>
    <name type="scientific">Vibrio parahaemolyticus serotype O3:K6 (strain RIMD 2210633)</name>
    <dbReference type="NCBI Taxonomy" id="223926"/>
    <lineage>
        <taxon>Bacteria</taxon>
        <taxon>Pseudomonadati</taxon>
        <taxon>Pseudomonadota</taxon>
        <taxon>Gammaproteobacteria</taxon>
        <taxon>Vibrionales</taxon>
        <taxon>Vibrionaceae</taxon>
        <taxon>Vibrio</taxon>
    </lineage>
</organism>